<dbReference type="EC" id="5.4.2.10" evidence="1"/>
<dbReference type="EMBL" id="CP001138">
    <property type="protein sequence ID" value="ACH52894.1"/>
    <property type="molecule type" value="Genomic_DNA"/>
</dbReference>
<dbReference type="RefSeq" id="WP_000071169.1">
    <property type="nucleotide sequence ID" value="NC_011149.1"/>
</dbReference>
<dbReference type="SMR" id="B5F6U4"/>
<dbReference type="KEGG" id="sea:SeAg_B3483"/>
<dbReference type="HOGENOM" id="CLU_016950_7_0_6"/>
<dbReference type="Proteomes" id="UP000008819">
    <property type="component" value="Chromosome"/>
</dbReference>
<dbReference type="GO" id="GO:0005829">
    <property type="term" value="C:cytosol"/>
    <property type="evidence" value="ECO:0007669"/>
    <property type="project" value="TreeGrafter"/>
</dbReference>
<dbReference type="GO" id="GO:0000287">
    <property type="term" value="F:magnesium ion binding"/>
    <property type="evidence" value="ECO:0007669"/>
    <property type="project" value="UniProtKB-UniRule"/>
</dbReference>
<dbReference type="GO" id="GO:0008966">
    <property type="term" value="F:phosphoglucosamine mutase activity"/>
    <property type="evidence" value="ECO:0007669"/>
    <property type="project" value="UniProtKB-UniRule"/>
</dbReference>
<dbReference type="GO" id="GO:0004615">
    <property type="term" value="F:phosphomannomutase activity"/>
    <property type="evidence" value="ECO:0007669"/>
    <property type="project" value="TreeGrafter"/>
</dbReference>
<dbReference type="GO" id="GO:0005975">
    <property type="term" value="P:carbohydrate metabolic process"/>
    <property type="evidence" value="ECO:0007669"/>
    <property type="project" value="InterPro"/>
</dbReference>
<dbReference type="GO" id="GO:0009252">
    <property type="term" value="P:peptidoglycan biosynthetic process"/>
    <property type="evidence" value="ECO:0007669"/>
    <property type="project" value="TreeGrafter"/>
</dbReference>
<dbReference type="GO" id="GO:0006048">
    <property type="term" value="P:UDP-N-acetylglucosamine biosynthetic process"/>
    <property type="evidence" value="ECO:0007669"/>
    <property type="project" value="TreeGrafter"/>
</dbReference>
<dbReference type="CDD" id="cd05802">
    <property type="entry name" value="GlmM"/>
    <property type="match status" value="1"/>
</dbReference>
<dbReference type="FunFam" id="3.30.310.50:FF:000001">
    <property type="entry name" value="Phosphoglucosamine mutase"/>
    <property type="match status" value="1"/>
</dbReference>
<dbReference type="FunFam" id="3.40.120.10:FF:000001">
    <property type="entry name" value="Phosphoglucosamine mutase"/>
    <property type="match status" value="1"/>
</dbReference>
<dbReference type="FunFam" id="3.40.120.10:FF:000002">
    <property type="entry name" value="Phosphoglucosamine mutase"/>
    <property type="match status" value="1"/>
</dbReference>
<dbReference type="Gene3D" id="3.40.120.10">
    <property type="entry name" value="Alpha-D-Glucose-1,6-Bisphosphate, subunit A, domain 3"/>
    <property type="match status" value="3"/>
</dbReference>
<dbReference type="Gene3D" id="3.30.310.50">
    <property type="entry name" value="Alpha-D-phosphohexomutase, C-terminal domain"/>
    <property type="match status" value="1"/>
</dbReference>
<dbReference type="HAMAP" id="MF_01554_B">
    <property type="entry name" value="GlmM_B"/>
    <property type="match status" value="1"/>
</dbReference>
<dbReference type="InterPro" id="IPR005844">
    <property type="entry name" value="A-D-PHexomutase_a/b/a-I"/>
</dbReference>
<dbReference type="InterPro" id="IPR016055">
    <property type="entry name" value="A-D-PHexomutase_a/b/a-I/II/III"/>
</dbReference>
<dbReference type="InterPro" id="IPR005845">
    <property type="entry name" value="A-D-PHexomutase_a/b/a-II"/>
</dbReference>
<dbReference type="InterPro" id="IPR005846">
    <property type="entry name" value="A-D-PHexomutase_a/b/a-III"/>
</dbReference>
<dbReference type="InterPro" id="IPR005843">
    <property type="entry name" value="A-D-PHexomutase_C"/>
</dbReference>
<dbReference type="InterPro" id="IPR036900">
    <property type="entry name" value="A-D-PHexomutase_C_sf"/>
</dbReference>
<dbReference type="InterPro" id="IPR016066">
    <property type="entry name" value="A-D-PHexomutase_CS"/>
</dbReference>
<dbReference type="InterPro" id="IPR005841">
    <property type="entry name" value="Alpha-D-phosphohexomutase_SF"/>
</dbReference>
<dbReference type="InterPro" id="IPR006352">
    <property type="entry name" value="GlmM_bact"/>
</dbReference>
<dbReference type="InterPro" id="IPR050060">
    <property type="entry name" value="Phosphoglucosamine_mutase"/>
</dbReference>
<dbReference type="NCBIfam" id="TIGR01455">
    <property type="entry name" value="glmM"/>
    <property type="match status" value="1"/>
</dbReference>
<dbReference type="NCBIfam" id="NF008139">
    <property type="entry name" value="PRK10887.1"/>
    <property type="match status" value="1"/>
</dbReference>
<dbReference type="PANTHER" id="PTHR42946:SF1">
    <property type="entry name" value="PHOSPHOGLUCOMUTASE (ALPHA-D-GLUCOSE-1,6-BISPHOSPHATE-DEPENDENT)"/>
    <property type="match status" value="1"/>
</dbReference>
<dbReference type="PANTHER" id="PTHR42946">
    <property type="entry name" value="PHOSPHOHEXOSE MUTASE"/>
    <property type="match status" value="1"/>
</dbReference>
<dbReference type="Pfam" id="PF02878">
    <property type="entry name" value="PGM_PMM_I"/>
    <property type="match status" value="1"/>
</dbReference>
<dbReference type="Pfam" id="PF02879">
    <property type="entry name" value="PGM_PMM_II"/>
    <property type="match status" value="1"/>
</dbReference>
<dbReference type="Pfam" id="PF02880">
    <property type="entry name" value="PGM_PMM_III"/>
    <property type="match status" value="1"/>
</dbReference>
<dbReference type="Pfam" id="PF00408">
    <property type="entry name" value="PGM_PMM_IV"/>
    <property type="match status" value="1"/>
</dbReference>
<dbReference type="PRINTS" id="PR00509">
    <property type="entry name" value="PGMPMM"/>
</dbReference>
<dbReference type="SUPFAM" id="SSF55957">
    <property type="entry name" value="Phosphoglucomutase, C-terminal domain"/>
    <property type="match status" value="1"/>
</dbReference>
<dbReference type="SUPFAM" id="SSF53738">
    <property type="entry name" value="Phosphoglucomutase, first 3 domains"/>
    <property type="match status" value="3"/>
</dbReference>
<dbReference type="PROSITE" id="PS00710">
    <property type="entry name" value="PGM_PMM"/>
    <property type="match status" value="1"/>
</dbReference>
<gene>
    <name evidence="1" type="primary">glmM</name>
    <name type="ordered locus">SeAg_B3483</name>
</gene>
<keyword id="KW-0413">Isomerase</keyword>
<keyword id="KW-0460">Magnesium</keyword>
<keyword id="KW-0479">Metal-binding</keyword>
<keyword id="KW-0597">Phosphoprotein</keyword>
<accession>B5F6U4</accession>
<proteinExistence type="inferred from homology"/>
<comment type="function">
    <text evidence="1">Catalyzes the conversion of glucosamine-6-phosphate to glucosamine-1-phosphate.</text>
</comment>
<comment type="catalytic activity">
    <reaction evidence="1">
        <text>alpha-D-glucosamine 1-phosphate = D-glucosamine 6-phosphate</text>
        <dbReference type="Rhea" id="RHEA:23424"/>
        <dbReference type="ChEBI" id="CHEBI:58516"/>
        <dbReference type="ChEBI" id="CHEBI:58725"/>
        <dbReference type="EC" id="5.4.2.10"/>
    </reaction>
</comment>
<comment type="cofactor">
    <cofactor evidence="1">
        <name>Mg(2+)</name>
        <dbReference type="ChEBI" id="CHEBI:18420"/>
    </cofactor>
    <text evidence="1">Binds 1 Mg(2+) ion per subunit.</text>
</comment>
<comment type="PTM">
    <text evidence="1">Activated by phosphorylation.</text>
</comment>
<comment type="similarity">
    <text evidence="1">Belongs to the phosphohexose mutase family.</text>
</comment>
<reference key="1">
    <citation type="journal article" date="2011" name="J. Bacteriol.">
        <title>Comparative genomics of 28 Salmonella enterica isolates: evidence for CRISPR-mediated adaptive sublineage evolution.</title>
        <authorList>
            <person name="Fricke W.F."/>
            <person name="Mammel M.K."/>
            <person name="McDermott P.F."/>
            <person name="Tartera C."/>
            <person name="White D.G."/>
            <person name="Leclerc J.E."/>
            <person name="Ravel J."/>
            <person name="Cebula T.A."/>
        </authorList>
    </citation>
    <scope>NUCLEOTIDE SEQUENCE [LARGE SCALE GENOMIC DNA]</scope>
    <source>
        <strain>SL483</strain>
    </source>
</reference>
<feature type="chain" id="PRO_1000201133" description="Phosphoglucosamine mutase">
    <location>
        <begin position="1"/>
        <end position="445"/>
    </location>
</feature>
<feature type="active site" description="Phosphoserine intermediate" evidence="1">
    <location>
        <position position="102"/>
    </location>
</feature>
<feature type="binding site" description="via phosphate group" evidence="1">
    <location>
        <position position="102"/>
    </location>
    <ligand>
        <name>Mg(2+)</name>
        <dbReference type="ChEBI" id="CHEBI:18420"/>
    </ligand>
</feature>
<feature type="binding site" evidence="1">
    <location>
        <position position="241"/>
    </location>
    <ligand>
        <name>Mg(2+)</name>
        <dbReference type="ChEBI" id="CHEBI:18420"/>
    </ligand>
</feature>
<feature type="binding site" evidence="1">
    <location>
        <position position="243"/>
    </location>
    <ligand>
        <name>Mg(2+)</name>
        <dbReference type="ChEBI" id="CHEBI:18420"/>
    </ligand>
</feature>
<feature type="binding site" evidence="1">
    <location>
        <position position="245"/>
    </location>
    <ligand>
        <name>Mg(2+)</name>
        <dbReference type="ChEBI" id="CHEBI:18420"/>
    </ligand>
</feature>
<feature type="modified residue" description="Phosphoserine" evidence="1">
    <location>
        <position position="102"/>
    </location>
</feature>
<sequence length="445" mass="47441">MSNRKYFGTDGIRGRVGNAPITPDFVLKLGWAAGKVLARHGSRKIIIGKDTRISGYMLESALEAGLAAAGLSASFTGPMPTPAVAYLTRTFRAEAGIVISASHNPFYDNGIKFFSIDGTKLPDDVEEAIEAEMEKEITCVDSAELGKASRIVDAAGRYIEFCKGTFPNELSLNGLKVVVDCANGATYHIAPNVLRELGATVIAIGCEPNGVNINEEVGATDVRALQARVLAEKADLGIALDGDGDRVIMVDHEGNKVDGDQIMYIIAREGLRQGQLRGGAVGTLMSNMGLELALKQLGIPFARAKVGDRYVLEKLQEKGWRIGAENSGHVILLDKTTTGDGIVAGLQVLAAMVRNHMSLHDLCSGMKMFPQILVNVRYTAGSGDPLENEAVKAVTADVEATLGNRGRVLLRKSGTEPLIRVMVEGEDEAQVTAFAHRIADAVKAV</sequence>
<organism>
    <name type="scientific">Salmonella agona (strain SL483)</name>
    <dbReference type="NCBI Taxonomy" id="454166"/>
    <lineage>
        <taxon>Bacteria</taxon>
        <taxon>Pseudomonadati</taxon>
        <taxon>Pseudomonadota</taxon>
        <taxon>Gammaproteobacteria</taxon>
        <taxon>Enterobacterales</taxon>
        <taxon>Enterobacteriaceae</taxon>
        <taxon>Salmonella</taxon>
    </lineage>
</organism>
<protein>
    <recommendedName>
        <fullName evidence="1">Phosphoglucosamine mutase</fullName>
        <ecNumber evidence="1">5.4.2.10</ecNumber>
    </recommendedName>
</protein>
<evidence type="ECO:0000255" key="1">
    <source>
        <dbReference type="HAMAP-Rule" id="MF_01554"/>
    </source>
</evidence>
<name>GLMM_SALA4</name>